<accession>Q9KNH2</accession>
<feature type="chain" id="PRO_0000371192" description="ATP synthase subunit delta">
    <location>
        <begin position="1"/>
        <end position="177"/>
    </location>
</feature>
<evidence type="ECO:0000255" key="1">
    <source>
        <dbReference type="HAMAP-Rule" id="MF_01416"/>
    </source>
</evidence>
<sequence>MSDLTTIARPYAKAAFDFAVEKQQLGHWSQMLAFTAEVAKNEQMHELLTSSGSANKLAEIFIAVCGEQLDGHGQNLIKVMAENGRLLAIPALYEHFAVLKQEHEKKVDVEVISATELSEQQRSEIGSKLEQRLERKVQLNCSVDETLLGGVIIRAGDLVIDNSARGRLKRLSDALQS</sequence>
<proteinExistence type="inferred from homology"/>
<organism>
    <name type="scientific">Vibrio cholerae serotype O1 (strain ATCC 39315 / El Tor Inaba N16961)</name>
    <dbReference type="NCBI Taxonomy" id="243277"/>
    <lineage>
        <taxon>Bacteria</taxon>
        <taxon>Pseudomonadati</taxon>
        <taxon>Pseudomonadota</taxon>
        <taxon>Gammaproteobacteria</taxon>
        <taxon>Vibrionales</taxon>
        <taxon>Vibrionaceae</taxon>
        <taxon>Vibrio</taxon>
    </lineage>
</organism>
<dbReference type="EMBL" id="AE003852">
    <property type="protein sequence ID" value="AAF95906.1"/>
    <property type="molecule type" value="Genomic_DNA"/>
</dbReference>
<dbReference type="PIR" id="A82037">
    <property type="entry name" value="A82037"/>
</dbReference>
<dbReference type="RefSeq" id="NP_232393.1">
    <property type="nucleotide sequence ID" value="NC_002505.1"/>
</dbReference>
<dbReference type="RefSeq" id="WP_001281808.1">
    <property type="nucleotide sequence ID" value="NZ_LT906614.1"/>
</dbReference>
<dbReference type="SMR" id="Q9KNH2"/>
<dbReference type="STRING" id="243277.VC_2767"/>
<dbReference type="DNASU" id="2614944"/>
<dbReference type="EnsemblBacteria" id="AAF95906">
    <property type="protein sequence ID" value="AAF95906"/>
    <property type="gene ID" value="VC_2767"/>
</dbReference>
<dbReference type="GeneID" id="69721151"/>
<dbReference type="KEGG" id="vch:VC_2767"/>
<dbReference type="PATRIC" id="fig|243277.26.peg.2642"/>
<dbReference type="eggNOG" id="COG0712">
    <property type="taxonomic scope" value="Bacteria"/>
</dbReference>
<dbReference type="HOGENOM" id="CLU_085114_3_0_6"/>
<dbReference type="Proteomes" id="UP000000584">
    <property type="component" value="Chromosome 1"/>
</dbReference>
<dbReference type="GO" id="GO:0005886">
    <property type="term" value="C:plasma membrane"/>
    <property type="evidence" value="ECO:0007669"/>
    <property type="project" value="UniProtKB-SubCell"/>
</dbReference>
<dbReference type="GO" id="GO:0045259">
    <property type="term" value="C:proton-transporting ATP synthase complex"/>
    <property type="evidence" value="ECO:0007669"/>
    <property type="project" value="UniProtKB-KW"/>
</dbReference>
<dbReference type="GO" id="GO:0046933">
    <property type="term" value="F:proton-transporting ATP synthase activity, rotational mechanism"/>
    <property type="evidence" value="ECO:0007669"/>
    <property type="project" value="UniProtKB-UniRule"/>
</dbReference>
<dbReference type="GO" id="GO:0015986">
    <property type="term" value="P:proton motive force-driven ATP synthesis"/>
    <property type="evidence" value="ECO:0000318"/>
    <property type="project" value="GO_Central"/>
</dbReference>
<dbReference type="Gene3D" id="1.10.520.20">
    <property type="entry name" value="N-terminal domain of the delta subunit of the F1F0-ATP synthase"/>
    <property type="match status" value="1"/>
</dbReference>
<dbReference type="HAMAP" id="MF_01416">
    <property type="entry name" value="ATP_synth_delta_bact"/>
    <property type="match status" value="1"/>
</dbReference>
<dbReference type="InterPro" id="IPR026015">
    <property type="entry name" value="ATP_synth_OSCP/delta_N_sf"/>
</dbReference>
<dbReference type="InterPro" id="IPR020781">
    <property type="entry name" value="ATPase_OSCP/d_CS"/>
</dbReference>
<dbReference type="InterPro" id="IPR000711">
    <property type="entry name" value="ATPase_OSCP/dsu"/>
</dbReference>
<dbReference type="NCBIfam" id="TIGR01145">
    <property type="entry name" value="ATP_synt_delta"/>
    <property type="match status" value="1"/>
</dbReference>
<dbReference type="NCBIfam" id="NF004402">
    <property type="entry name" value="PRK05758.2-2"/>
    <property type="match status" value="1"/>
</dbReference>
<dbReference type="NCBIfam" id="NF004404">
    <property type="entry name" value="PRK05758.2-5"/>
    <property type="match status" value="1"/>
</dbReference>
<dbReference type="PANTHER" id="PTHR11910">
    <property type="entry name" value="ATP SYNTHASE DELTA CHAIN"/>
    <property type="match status" value="1"/>
</dbReference>
<dbReference type="Pfam" id="PF00213">
    <property type="entry name" value="OSCP"/>
    <property type="match status" value="1"/>
</dbReference>
<dbReference type="PRINTS" id="PR00125">
    <property type="entry name" value="ATPASEDELTA"/>
</dbReference>
<dbReference type="SUPFAM" id="SSF47928">
    <property type="entry name" value="N-terminal domain of the delta subunit of the F1F0-ATP synthase"/>
    <property type="match status" value="1"/>
</dbReference>
<dbReference type="PROSITE" id="PS00389">
    <property type="entry name" value="ATPASE_DELTA"/>
    <property type="match status" value="1"/>
</dbReference>
<protein>
    <recommendedName>
        <fullName evidence="1">ATP synthase subunit delta</fullName>
    </recommendedName>
    <alternativeName>
        <fullName evidence="1">ATP synthase F(1) sector subunit delta</fullName>
    </alternativeName>
    <alternativeName>
        <fullName evidence="1">F-type ATPase subunit delta</fullName>
        <shortName evidence="1">F-ATPase subunit delta</shortName>
    </alternativeName>
</protein>
<gene>
    <name evidence="1" type="primary">atpH</name>
    <name type="ordered locus">VC_2767</name>
</gene>
<keyword id="KW-0066">ATP synthesis</keyword>
<keyword id="KW-0997">Cell inner membrane</keyword>
<keyword id="KW-1003">Cell membrane</keyword>
<keyword id="KW-0139">CF(1)</keyword>
<keyword id="KW-0375">Hydrogen ion transport</keyword>
<keyword id="KW-0406">Ion transport</keyword>
<keyword id="KW-0472">Membrane</keyword>
<keyword id="KW-1185">Reference proteome</keyword>
<keyword id="KW-0813">Transport</keyword>
<reference key="1">
    <citation type="journal article" date="2000" name="Nature">
        <title>DNA sequence of both chromosomes of the cholera pathogen Vibrio cholerae.</title>
        <authorList>
            <person name="Heidelberg J.F."/>
            <person name="Eisen J.A."/>
            <person name="Nelson W.C."/>
            <person name="Clayton R.A."/>
            <person name="Gwinn M.L."/>
            <person name="Dodson R.J."/>
            <person name="Haft D.H."/>
            <person name="Hickey E.K."/>
            <person name="Peterson J.D."/>
            <person name="Umayam L.A."/>
            <person name="Gill S.R."/>
            <person name="Nelson K.E."/>
            <person name="Read T.D."/>
            <person name="Tettelin H."/>
            <person name="Richardson D.L."/>
            <person name="Ermolaeva M.D."/>
            <person name="Vamathevan J.J."/>
            <person name="Bass S."/>
            <person name="Qin H."/>
            <person name="Dragoi I."/>
            <person name="Sellers P."/>
            <person name="McDonald L.A."/>
            <person name="Utterback T.R."/>
            <person name="Fleischmann R.D."/>
            <person name="Nierman W.C."/>
            <person name="White O."/>
            <person name="Salzberg S.L."/>
            <person name="Smith H.O."/>
            <person name="Colwell R.R."/>
            <person name="Mekalanos J.J."/>
            <person name="Venter J.C."/>
            <person name="Fraser C.M."/>
        </authorList>
    </citation>
    <scope>NUCLEOTIDE SEQUENCE [LARGE SCALE GENOMIC DNA]</scope>
    <source>
        <strain>ATCC 39315 / El Tor Inaba N16961</strain>
    </source>
</reference>
<comment type="function">
    <text evidence="1">F(1)F(0) ATP synthase produces ATP from ADP in the presence of a proton or sodium gradient. F-type ATPases consist of two structural domains, F(1) containing the extramembraneous catalytic core and F(0) containing the membrane proton channel, linked together by a central stalk and a peripheral stalk. During catalysis, ATP synthesis in the catalytic domain of F(1) is coupled via a rotary mechanism of the central stalk subunits to proton translocation.</text>
</comment>
<comment type="function">
    <text evidence="1">This protein is part of the stalk that links CF(0) to CF(1). It either transmits conformational changes from CF(0) to CF(1) or is implicated in proton conduction.</text>
</comment>
<comment type="subunit">
    <text evidence="1">F-type ATPases have 2 components, F(1) - the catalytic core - and F(0) - the membrane proton channel. F(1) has five subunits: alpha(3), beta(3), gamma(1), delta(1), epsilon(1). F(0) has three main subunits: a(1), b(2) and c(10-14). The alpha and beta chains form an alternating ring which encloses part of the gamma chain. F(1) is attached to F(0) by a central stalk formed by the gamma and epsilon chains, while a peripheral stalk is formed by the delta and b chains.</text>
</comment>
<comment type="subcellular location">
    <subcellularLocation>
        <location evidence="1">Cell inner membrane</location>
        <topology evidence="1">Peripheral membrane protein</topology>
    </subcellularLocation>
</comment>
<comment type="similarity">
    <text evidence="1">Belongs to the ATPase delta chain family.</text>
</comment>
<name>ATPD_VIBCH</name>